<organism>
    <name type="scientific">Trittame loki</name>
    <name type="common">Brush-footed trapdoor spider</name>
    <dbReference type="NCBI Taxonomy" id="1295018"/>
    <lineage>
        <taxon>Eukaryota</taxon>
        <taxon>Metazoa</taxon>
        <taxon>Ecdysozoa</taxon>
        <taxon>Arthropoda</taxon>
        <taxon>Chelicerata</taxon>
        <taxon>Arachnida</taxon>
        <taxon>Araneae</taxon>
        <taxon>Mygalomorphae</taxon>
        <taxon>Barychelidae</taxon>
        <taxon>Trittame</taxon>
    </lineage>
</organism>
<feature type="signal peptide" evidence="2">
    <location>
        <begin position="1"/>
        <end position="17"/>
    </location>
</feature>
<feature type="chain" id="PRO_0000429229" description="U15-barytoxin-Tl1a">
    <location>
        <begin position="18"/>
        <end position="121"/>
    </location>
</feature>
<feature type="disulfide bond" evidence="3">
    <location>
        <begin position="56"/>
        <end position="74"/>
    </location>
</feature>
<feature type="disulfide bond" evidence="3">
    <location>
        <begin position="67"/>
        <end position="80"/>
    </location>
</feature>
<feature type="disulfide bond" evidence="3">
    <location>
        <begin position="71"/>
        <end position="119"/>
    </location>
</feature>
<feature type="disulfide bond" evidence="3">
    <location>
        <begin position="73"/>
        <end position="90"/>
    </location>
</feature>
<keyword id="KW-1015">Disulfide bond</keyword>
<keyword id="KW-0872">Ion channel impairing toxin</keyword>
<keyword id="KW-0960">Knottin</keyword>
<keyword id="KW-0964">Secreted</keyword>
<keyword id="KW-0732">Signal</keyword>
<keyword id="KW-0800">Toxin</keyword>
<protein>
    <recommendedName>
        <fullName evidence="3">U15-barytoxin-Tl1a</fullName>
        <shortName evidence="3">U15-BATX-Tl1a</shortName>
    </recommendedName>
    <alternativeName>
        <fullName evidence="4">Toxin tri-ICK-22</fullName>
    </alternativeName>
</protein>
<dbReference type="EMBL" id="GAQE01000025">
    <property type="protein sequence ID" value="JAB84529.1"/>
    <property type="molecule type" value="Transcribed_RNA"/>
</dbReference>
<dbReference type="ArachnoServer" id="AS001541">
    <property type="toxin name" value="U15-barytoxin-Tl1a"/>
</dbReference>
<dbReference type="GO" id="GO:0005576">
    <property type="term" value="C:extracellular region"/>
    <property type="evidence" value="ECO:0007669"/>
    <property type="project" value="UniProtKB-SubCell"/>
</dbReference>
<dbReference type="GO" id="GO:0099106">
    <property type="term" value="F:ion channel regulator activity"/>
    <property type="evidence" value="ECO:0007669"/>
    <property type="project" value="UniProtKB-KW"/>
</dbReference>
<dbReference type="GO" id="GO:0090729">
    <property type="term" value="F:toxin activity"/>
    <property type="evidence" value="ECO:0007669"/>
    <property type="project" value="UniProtKB-KW"/>
</dbReference>
<comment type="function">
    <text evidence="3">Ion channel inhibitor.</text>
</comment>
<comment type="subcellular location">
    <subcellularLocation>
        <location evidence="1">Secreted</location>
    </subcellularLocation>
</comment>
<comment type="tissue specificity">
    <text>Expressed by the venom gland.</text>
</comment>
<comment type="domain">
    <text evidence="3">The presence of a 'disulfide through disulfide knot' structurally defines this protein as a knottin.</text>
</comment>
<comment type="similarity">
    <text>Belongs to the neurotoxin 03 (Tx2) family. 03 subfamily.</text>
</comment>
<evidence type="ECO:0000250" key="1"/>
<evidence type="ECO:0000255" key="2"/>
<evidence type="ECO:0000305" key="3"/>
<evidence type="ECO:0000312" key="4">
    <source>
        <dbReference type="EMBL" id="JAB84529.1"/>
    </source>
</evidence>
<sequence length="121" mass="12906">MKLSVIVLVASFGFAVALPSKKREETAAENELTGDQQDAEQHMIYAVAFPEIRTSCVIGWKQQGATCERDCECCGVAATCITGDKSTGFCGYHQTPNVLGQGILYTADTIKNGFSAIFCAG</sequence>
<name>TX33A_TRILK</name>
<proteinExistence type="evidence at transcript level"/>
<reference key="1">
    <citation type="journal article" date="2013" name="Toxins">
        <title>A proteomics and transcriptomics investigation of the venom from the barychelid spider Trittame loki (brush-foot trapdoor).</title>
        <authorList>
            <person name="Undheim E.A."/>
            <person name="Sunagar K."/>
            <person name="Herzig V."/>
            <person name="Kely L."/>
            <person name="Low D.H."/>
            <person name="Jackson T.N."/>
            <person name="Jones A."/>
            <person name="Kurniawan N."/>
            <person name="King G.F."/>
            <person name="Ali S.A."/>
            <person name="Antunes A."/>
            <person name="Ruder T."/>
            <person name="Fry B.G."/>
        </authorList>
    </citation>
    <scope>NUCLEOTIDE SEQUENCE [MRNA]</scope>
    <source>
        <tissue>Venom gland</tissue>
    </source>
</reference>
<accession>W4VRX0</accession>